<sequence>MVKLAFPRELRLLTPKHFTYVFQQPQRASSPEITILGRPNELGHPRIGLTIAKKNVKRAHERNRIKRLARESFRLNQHELPPMDFVVLVRKGVAELDNRALTEALGKLWRRHCRLARAS</sequence>
<accession>Q7M7H7</accession>
<proteinExistence type="inferred from homology"/>
<feature type="chain" id="PRO_0000198504" description="Ribonuclease P protein component">
    <location>
        <begin position="1"/>
        <end position="119"/>
    </location>
</feature>
<name>RNPA_PHOLL</name>
<comment type="function">
    <text evidence="1">RNaseP catalyzes the removal of the 5'-leader sequence from pre-tRNA to produce the mature 5'-terminus. It can also cleave other RNA substrates such as 4.5S RNA. The protein component plays an auxiliary but essential role in vivo by binding to the 5'-leader sequence and broadening the substrate specificity of the ribozyme.</text>
</comment>
<comment type="catalytic activity">
    <reaction evidence="1">
        <text>Endonucleolytic cleavage of RNA, removing 5'-extranucleotides from tRNA precursor.</text>
        <dbReference type="EC" id="3.1.26.5"/>
    </reaction>
</comment>
<comment type="subunit">
    <text evidence="1">Consists of a catalytic RNA component (M1 or rnpB) and a protein subunit.</text>
</comment>
<comment type="similarity">
    <text evidence="1">Belongs to the RnpA family.</text>
</comment>
<organism>
    <name type="scientific">Photorhabdus laumondii subsp. laumondii (strain DSM 15139 / CIP 105565 / TT01)</name>
    <name type="common">Photorhabdus luminescens subsp. laumondii</name>
    <dbReference type="NCBI Taxonomy" id="243265"/>
    <lineage>
        <taxon>Bacteria</taxon>
        <taxon>Pseudomonadati</taxon>
        <taxon>Pseudomonadota</taxon>
        <taxon>Gammaproteobacteria</taxon>
        <taxon>Enterobacterales</taxon>
        <taxon>Morganellaceae</taxon>
        <taxon>Photorhabdus</taxon>
    </lineage>
</organism>
<evidence type="ECO:0000255" key="1">
    <source>
        <dbReference type="HAMAP-Rule" id="MF_00227"/>
    </source>
</evidence>
<reference key="1">
    <citation type="journal article" date="2003" name="Nat. Biotechnol.">
        <title>The genome sequence of the entomopathogenic bacterium Photorhabdus luminescens.</title>
        <authorList>
            <person name="Duchaud E."/>
            <person name="Rusniok C."/>
            <person name="Frangeul L."/>
            <person name="Buchrieser C."/>
            <person name="Givaudan A."/>
            <person name="Taourit S."/>
            <person name="Bocs S."/>
            <person name="Boursaux-Eude C."/>
            <person name="Chandler M."/>
            <person name="Charles J.-F."/>
            <person name="Dassa E."/>
            <person name="Derose R."/>
            <person name="Derzelle S."/>
            <person name="Freyssinet G."/>
            <person name="Gaudriault S."/>
            <person name="Medigue C."/>
            <person name="Lanois A."/>
            <person name="Powell K."/>
            <person name="Siguier P."/>
            <person name="Vincent R."/>
            <person name="Wingate V."/>
            <person name="Zouine M."/>
            <person name="Glaser P."/>
            <person name="Boemare N."/>
            <person name="Danchin A."/>
            <person name="Kunst F."/>
        </authorList>
    </citation>
    <scope>NUCLEOTIDE SEQUENCE [LARGE SCALE GENOMIC DNA]</scope>
    <source>
        <strain>DSM 15139 / CIP 105565 / TT01</strain>
    </source>
</reference>
<dbReference type="EC" id="3.1.26.5" evidence="1"/>
<dbReference type="EMBL" id="BX571875">
    <property type="protein sequence ID" value="CAE17280.1"/>
    <property type="molecule type" value="Genomic_DNA"/>
</dbReference>
<dbReference type="RefSeq" id="WP_011148961.1">
    <property type="nucleotide sequence ID" value="NC_005126.1"/>
</dbReference>
<dbReference type="SMR" id="Q7M7H7"/>
<dbReference type="STRING" id="243265.plu4908"/>
<dbReference type="GeneID" id="48851135"/>
<dbReference type="KEGG" id="plu:plu4908"/>
<dbReference type="eggNOG" id="COG0594">
    <property type="taxonomic scope" value="Bacteria"/>
</dbReference>
<dbReference type="HOGENOM" id="CLU_117179_11_0_6"/>
<dbReference type="OrthoDB" id="9796422at2"/>
<dbReference type="Proteomes" id="UP000002514">
    <property type="component" value="Chromosome"/>
</dbReference>
<dbReference type="GO" id="GO:0030677">
    <property type="term" value="C:ribonuclease P complex"/>
    <property type="evidence" value="ECO:0007669"/>
    <property type="project" value="TreeGrafter"/>
</dbReference>
<dbReference type="GO" id="GO:0042781">
    <property type="term" value="F:3'-tRNA processing endoribonuclease activity"/>
    <property type="evidence" value="ECO:0007669"/>
    <property type="project" value="TreeGrafter"/>
</dbReference>
<dbReference type="GO" id="GO:0004526">
    <property type="term" value="F:ribonuclease P activity"/>
    <property type="evidence" value="ECO:0007669"/>
    <property type="project" value="UniProtKB-UniRule"/>
</dbReference>
<dbReference type="GO" id="GO:0000049">
    <property type="term" value="F:tRNA binding"/>
    <property type="evidence" value="ECO:0007669"/>
    <property type="project" value="UniProtKB-UniRule"/>
</dbReference>
<dbReference type="GO" id="GO:0001682">
    <property type="term" value="P:tRNA 5'-leader removal"/>
    <property type="evidence" value="ECO:0007669"/>
    <property type="project" value="UniProtKB-UniRule"/>
</dbReference>
<dbReference type="FunFam" id="3.30.230.10:FF:000016">
    <property type="entry name" value="Ribonuclease P protein component"/>
    <property type="match status" value="1"/>
</dbReference>
<dbReference type="Gene3D" id="3.30.230.10">
    <property type="match status" value="1"/>
</dbReference>
<dbReference type="HAMAP" id="MF_00227">
    <property type="entry name" value="RNase_P"/>
    <property type="match status" value="1"/>
</dbReference>
<dbReference type="InterPro" id="IPR020568">
    <property type="entry name" value="Ribosomal_Su5_D2-typ_SF"/>
</dbReference>
<dbReference type="InterPro" id="IPR014721">
    <property type="entry name" value="Ribsml_uS5_D2-typ_fold_subgr"/>
</dbReference>
<dbReference type="InterPro" id="IPR000100">
    <property type="entry name" value="RNase_P"/>
</dbReference>
<dbReference type="InterPro" id="IPR020539">
    <property type="entry name" value="RNase_P_CS"/>
</dbReference>
<dbReference type="NCBIfam" id="TIGR00188">
    <property type="entry name" value="rnpA"/>
    <property type="match status" value="1"/>
</dbReference>
<dbReference type="PANTHER" id="PTHR33992">
    <property type="entry name" value="RIBONUCLEASE P PROTEIN COMPONENT"/>
    <property type="match status" value="1"/>
</dbReference>
<dbReference type="PANTHER" id="PTHR33992:SF1">
    <property type="entry name" value="RIBONUCLEASE P PROTEIN COMPONENT"/>
    <property type="match status" value="1"/>
</dbReference>
<dbReference type="Pfam" id="PF00825">
    <property type="entry name" value="Ribonuclease_P"/>
    <property type="match status" value="1"/>
</dbReference>
<dbReference type="SUPFAM" id="SSF54211">
    <property type="entry name" value="Ribosomal protein S5 domain 2-like"/>
    <property type="match status" value="1"/>
</dbReference>
<dbReference type="PROSITE" id="PS00648">
    <property type="entry name" value="RIBONUCLEASE_P"/>
    <property type="match status" value="1"/>
</dbReference>
<keyword id="KW-0255">Endonuclease</keyword>
<keyword id="KW-0378">Hydrolase</keyword>
<keyword id="KW-0540">Nuclease</keyword>
<keyword id="KW-1185">Reference proteome</keyword>
<keyword id="KW-0694">RNA-binding</keyword>
<keyword id="KW-0819">tRNA processing</keyword>
<protein>
    <recommendedName>
        <fullName evidence="1">Ribonuclease P protein component</fullName>
        <shortName evidence="1">RNase P protein</shortName>
        <shortName evidence="1">RNaseP protein</shortName>
        <ecNumber evidence="1">3.1.26.5</ecNumber>
    </recommendedName>
    <alternativeName>
        <fullName evidence="1">Protein C5</fullName>
    </alternativeName>
</protein>
<gene>
    <name evidence="1" type="primary">rnpA</name>
    <name type="ordered locus">plu4908</name>
</gene>